<protein>
    <recommendedName>
        <fullName evidence="1">Putative phosphoenolpyruvate synthase regulatory protein</fullName>
        <shortName evidence="1">PEP synthase regulatory protein</shortName>
        <shortName evidence="1">PSRP</shortName>
        <ecNumber evidence="1">2.7.11.33</ecNumber>
        <ecNumber evidence="1">2.7.4.28</ecNumber>
    </recommendedName>
    <alternativeName>
        <fullName evidence="1">Pyruvate, water dikinase regulatory protein</fullName>
    </alternativeName>
</protein>
<dbReference type="EC" id="2.7.11.33" evidence="1"/>
<dbReference type="EC" id="2.7.4.28" evidence="1"/>
<dbReference type="EMBL" id="CP000458">
    <property type="protein sequence ID" value="ABK08754.1"/>
    <property type="molecule type" value="Genomic_DNA"/>
</dbReference>
<dbReference type="RefSeq" id="WP_011549549.1">
    <property type="nucleotide sequence ID" value="NC_008542.1"/>
</dbReference>
<dbReference type="SMR" id="A0K8C7"/>
<dbReference type="KEGG" id="bch:Bcen2424_2003"/>
<dbReference type="HOGENOM" id="CLU_046206_1_0_4"/>
<dbReference type="GO" id="GO:0043531">
    <property type="term" value="F:ADP binding"/>
    <property type="evidence" value="ECO:0007669"/>
    <property type="project" value="UniProtKB-UniRule"/>
</dbReference>
<dbReference type="GO" id="GO:0005524">
    <property type="term" value="F:ATP binding"/>
    <property type="evidence" value="ECO:0007669"/>
    <property type="project" value="InterPro"/>
</dbReference>
<dbReference type="GO" id="GO:0016776">
    <property type="term" value="F:phosphotransferase activity, phosphate group as acceptor"/>
    <property type="evidence" value="ECO:0007669"/>
    <property type="project" value="UniProtKB-UniRule"/>
</dbReference>
<dbReference type="GO" id="GO:0004674">
    <property type="term" value="F:protein serine/threonine kinase activity"/>
    <property type="evidence" value="ECO:0007669"/>
    <property type="project" value="UniProtKB-UniRule"/>
</dbReference>
<dbReference type="HAMAP" id="MF_01062">
    <property type="entry name" value="PSRP"/>
    <property type="match status" value="1"/>
</dbReference>
<dbReference type="InterPro" id="IPR005177">
    <property type="entry name" value="Kinase-pyrophosphorylase"/>
</dbReference>
<dbReference type="InterPro" id="IPR026530">
    <property type="entry name" value="PSRP"/>
</dbReference>
<dbReference type="NCBIfam" id="NF003742">
    <property type="entry name" value="PRK05339.1"/>
    <property type="match status" value="1"/>
</dbReference>
<dbReference type="PANTHER" id="PTHR31756">
    <property type="entry name" value="PYRUVATE, PHOSPHATE DIKINASE REGULATORY PROTEIN 1, CHLOROPLASTIC"/>
    <property type="match status" value="1"/>
</dbReference>
<dbReference type="PANTHER" id="PTHR31756:SF3">
    <property type="entry name" value="PYRUVATE, PHOSPHATE DIKINASE REGULATORY PROTEIN 1, CHLOROPLASTIC"/>
    <property type="match status" value="1"/>
</dbReference>
<dbReference type="Pfam" id="PF03618">
    <property type="entry name" value="Kinase-PPPase"/>
    <property type="match status" value="1"/>
</dbReference>
<reference key="1">
    <citation type="submission" date="2006-08" db="EMBL/GenBank/DDBJ databases">
        <title>Complete sequence of chromosome 1 of Burkholderia cenocepacia HI2424.</title>
        <authorList>
            <person name="Copeland A."/>
            <person name="Lucas S."/>
            <person name="Lapidus A."/>
            <person name="Barry K."/>
            <person name="Detter J.C."/>
            <person name="Glavina del Rio T."/>
            <person name="Hammon N."/>
            <person name="Israni S."/>
            <person name="Pitluck S."/>
            <person name="Chain P."/>
            <person name="Malfatti S."/>
            <person name="Shin M."/>
            <person name="Vergez L."/>
            <person name="Schmutz J."/>
            <person name="Larimer F."/>
            <person name="Land M."/>
            <person name="Hauser L."/>
            <person name="Kyrpides N."/>
            <person name="Kim E."/>
            <person name="LiPuma J.J."/>
            <person name="Gonzalez C.F."/>
            <person name="Konstantinidis K."/>
            <person name="Tiedje J.M."/>
            <person name="Richardson P."/>
        </authorList>
    </citation>
    <scope>NUCLEOTIDE SEQUENCE [LARGE SCALE GENOMIC DNA]</scope>
    <source>
        <strain>HI2424</strain>
    </source>
</reference>
<comment type="function">
    <text evidence="1">Bifunctional serine/threonine kinase and phosphorylase involved in the regulation of the phosphoenolpyruvate synthase (PEPS) by catalyzing its phosphorylation/dephosphorylation.</text>
</comment>
<comment type="catalytic activity">
    <reaction evidence="1">
        <text>[pyruvate, water dikinase] + ADP = [pyruvate, water dikinase]-phosphate + AMP + H(+)</text>
        <dbReference type="Rhea" id="RHEA:46020"/>
        <dbReference type="Rhea" id="RHEA-COMP:11425"/>
        <dbReference type="Rhea" id="RHEA-COMP:11426"/>
        <dbReference type="ChEBI" id="CHEBI:15378"/>
        <dbReference type="ChEBI" id="CHEBI:43176"/>
        <dbReference type="ChEBI" id="CHEBI:68546"/>
        <dbReference type="ChEBI" id="CHEBI:456215"/>
        <dbReference type="ChEBI" id="CHEBI:456216"/>
        <dbReference type="EC" id="2.7.11.33"/>
    </reaction>
</comment>
<comment type="catalytic activity">
    <reaction evidence="1">
        <text>[pyruvate, water dikinase]-phosphate + phosphate + H(+) = [pyruvate, water dikinase] + diphosphate</text>
        <dbReference type="Rhea" id="RHEA:48580"/>
        <dbReference type="Rhea" id="RHEA-COMP:11425"/>
        <dbReference type="Rhea" id="RHEA-COMP:11426"/>
        <dbReference type="ChEBI" id="CHEBI:15378"/>
        <dbReference type="ChEBI" id="CHEBI:33019"/>
        <dbReference type="ChEBI" id="CHEBI:43176"/>
        <dbReference type="ChEBI" id="CHEBI:43474"/>
        <dbReference type="ChEBI" id="CHEBI:68546"/>
        <dbReference type="EC" id="2.7.4.28"/>
    </reaction>
</comment>
<comment type="similarity">
    <text evidence="1">Belongs to the pyruvate, phosphate/water dikinase regulatory protein family. PSRP subfamily.</text>
</comment>
<evidence type="ECO:0000255" key="1">
    <source>
        <dbReference type="HAMAP-Rule" id="MF_01062"/>
    </source>
</evidence>
<sequence length="271" mass="30575">MLPTVFIVSDGTGITAETFAHSILSQFDQKFRLVRVPFVDSLDKAYATVEKINEAAVHDGRRAIVFTTLVDSESNDIVKRSNALVLDMFQRFVEPLEQELELKSSHAMGRGHQNADTEEYKTRIEAINFSLAHDDGQSNRNLSEADVILVGVSRSGKTPTSLYLAMQYGVKAANYPLIPEDFERGKLPSALAPYSEKLFGLSIDPQRLSEIRNERRPGSKYAAPENCRYEINEAEAMMRREGIKWLSSTHKSIEEIATTILQEIRLDRQSY</sequence>
<feature type="chain" id="PRO_0000316645" description="Putative phosphoenolpyruvate synthase regulatory protein">
    <location>
        <begin position="1"/>
        <end position="271"/>
    </location>
</feature>
<feature type="binding site" evidence="1">
    <location>
        <begin position="151"/>
        <end position="158"/>
    </location>
    <ligand>
        <name>ADP</name>
        <dbReference type="ChEBI" id="CHEBI:456216"/>
    </ligand>
</feature>
<keyword id="KW-0418">Kinase</keyword>
<keyword id="KW-0547">Nucleotide-binding</keyword>
<keyword id="KW-0723">Serine/threonine-protein kinase</keyword>
<keyword id="KW-0808">Transferase</keyword>
<accession>A0K8C7</accession>
<organism>
    <name type="scientific">Burkholderia cenocepacia (strain HI2424)</name>
    <dbReference type="NCBI Taxonomy" id="331272"/>
    <lineage>
        <taxon>Bacteria</taxon>
        <taxon>Pseudomonadati</taxon>
        <taxon>Pseudomonadota</taxon>
        <taxon>Betaproteobacteria</taxon>
        <taxon>Burkholderiales</taxon>
        <taxon>Burkholderiaceae</taxon>
        <taxon>Burkholderia</taxon>
        <taxon>Burkholderia cepacia complex</taxon>
    </lineage>
</organism>
<proteinExistence type="inferred from homology"/>
<name>PSRP_BURCH</name>
<gene>
    <name type="ordered locus">Bcen2424_2003</name>
</gene>